<accession>Q9LD45</accession>
<keyword id="KW-0007">Acetylation</keyword>
<keyword id="KW-0053">Apoptosis</keyword>
<keyword id="KW-0256">Endoplasmic reticulum</keyword>
<keyword id="KW-0472">Membrane</keyword>
<keyword id="KW-1185">Reference proteome</keyword>
<keyword id="KW-0812">Transmembrane</keyword>
<keyword id="KW-1133">Transmembrane helix</keyword>
<comment type="function">
    <text evidence="2 4 8">Suppressor of apoptosis. Modulator of endoplasmic reticulum stress-mediated programmed cell death. Involved in methyl jasmonate-induced leaf senescence through regulating cytoplasmic calcium level.</text>
</comment>
<comment type="subunit">
    <text evidence="3 5 6 9">Interacts (via C-terminus) with calmodulin, CYTB5-B and CYTB5-D. Interacts indirectly with FAH1 via CYTB5-D.</text>
</comment>
<comment type="interaction">
    <interactant intactId="EBI-1644586">
        <id>Q9LD45</id>
    </interactant>
    <interactant intactId="EBI-1236031">
        <id>P59220</id>
        <label>CAM7</label>
    </interactant>
    <organismsDiffer>false</organismsDiffer>
    <experiments>2</experiments>
</comment>
<comment type="interaction">
    <interactant intactId="EBI-1644586">
        <id>Q9LD45</id>
    </interactant>
    <interactant intactId="EBI-2295402">
        <id>O48845</id>
        <label>CYTB5-B</label>
    </interactant>
    <organismsDiffer>false</organismsDiffer>
    <experiments>5</experiments>
</comment>
<comment type="subcellular location">
    <subcellularLocation>
        <location evidence="5">Endoplasmic reticulum membrane</location>
        <topology evidence="5">Multi-pass membrane protein</topology>
    </subcellularLocation>
</comment>
<comment type="tissue specificity">
    <text evidence="6">Expressed in root tips, root vasculature, flower tissues, including stamens and sepals, and in the base of siliques. Not detected in mature leaves.</text>
</comment>
<comment type="induction">
    <text evidence="2 6 7">Up-regulated by water stress, heat-shock, mycotoxin and pathogens.</text>
</comment>
<comment type="disruption phenotype">
    <text evidence="2 4 6 7 8">No visible phenotype under normal growth conditions. Accelerated methyl jasmonate-induced leaf senescence. Enhanced sensitivity to water stress, heat shock, toxin, tunicamycin and pathogens.</text>
</comment>
<comment type="similarity">
    <text evidence="10">Belongs to the BI1 family.</text>
</comment>
<dbReference type="EMBL" id="AB025927">
    <property type="protein sequence ID" value="BAA89541.2"/>
    <property type="molecule type" value="mRNA"/>
</dbReference>
<dbReference type="EMBL" id="AF208124">
    <property type="protein sequence ID" value="AAG35727.1"/>
    <property type="molecule type" value="mRNA"/>
</dbReference>
<dbReference type="EMBL" id="AB025609">
    <property type="protein sequence ID" value="BAA98107.1"/>
    <property type="molecule type" value="Genomic_DNA"/>
</dbReference>
<dbReference type="EMBL" id="CP002688">
    <property type="protein sequence ID" value="AED95473.1"/>
    <property type="molecule type" value="Genomic_DNA"/>
</dbReference>
<dbReference type="EMBL" id="AY091134">
    <property type="protein sequence ID" value="AAM14083.1"/>
    <property type="molecule type" value="mRNA"/>
</dbReference>
<dbReference type="EMBL" id="AY114059">
    <property type="protein sequence ID" value="AAM45107.1"/>
    <property type="molecule type" value="mRNA"/>
</dbReference>
<dbReference type="PIR" id="T52449">
    <property type="entry name" value="T52449"/>
</dbReference>
<dbReference type="SMR" id="Q9LD45"/>
<dbReference type="BioGRID" id="20006">
    <property type="interactions" value="9"/>
</dbReference>
<dbReference type="FunCoup" id="Q9LD45">
    <property type="interactions" value="2352"/>
</dbReference>
<dbReference type="IntAct" id="Q9LD45">
    <property type="interactions" value="8"/>
</dbReference>
<dbReference type="STRING" id="3702.Q9LD45"/>
<dbReference type="iPTMnet" id="Q9LD45"/>
<dbReference type="PaxDb" id="3702-AT5G47120.1"/>
<dbReference type="ProteomicsDB" id="240372"/>
<dbReference type="EnsemblPlants" id="AT5G47120.1">
    <property type="protein sequence ID" value="AT5G47120.1"/>
    <property type="gene ID" value="AT5G47120"/>
</dbReference>
<dbReference type="GeneID" id="834758"/>
<dbReference type="Gramene" id="AT5G47120.1">
    <property type="protein sequence ID" value="AT5G47120.1"/>
    <property type="gene ID" value="AT5G47120"/>
</dbReference>
<dbReference type="KEGG" id="ath:AT5G47120"/>
<dbReference type="Araport" id="AT5G47120"/>
<dbReference type="TAIR" id="AT5G47120">
    <property type="gene designation" value="BI1"/>
</dbReference>
<dbReference type="eggNOG" id="KOG1629">
    <property type="taxonomic scope" value="Eukaryota"/>
</dbReference>
<dbReference type="HOGENOM" id="CLU_061277_1_0_1"/>
<dbReference type="InParanoid" id="Q9LD45"/>
<dbReference type="OMA" id="SRDFIMH"/>
<dbReference type="PhylomeDB" id="Q9LD45"/>
<dbReference type="PRO" id="PR:Q9LD45"/>
<dbReference type="Proteomes" id="UP000006548">
    <property type="component" value="Chromosome 5"/>
</dbReference>
<dbReference type="ExpressionAtlas" id="Q9LD45">
    <property type="expression patterns" value="baseline and differential"/>
</dbReference>
<dbReference type="GO" id="GO:0005737">
    <property type="term" value="C:cytoplasm"/>
    <property type="evidence" value="ECO:0007005"/>
    <property type="project" value="TAIR"/>
</dbReference>
<dbReference type="GO" id="GO:0005783">
    <property type="term" value="C:endoplasmic reticulum"/>
    <property type="evidence" value="ECO:0000314"/>
    <property type="project" value="TAIR"/>
</dbReference>
<dbReference type="GO" id="GO:0005789">
    <property type="term" value="C:endoplasmic reticulum membrane"/>
    <property type="evidence" value="ECO:0007669"/>
    <property type="project" value="UniProtKB-SubCell"/>
</dbReference>
<dbReference type="GO" id="GO:0005635">
    <property type="term" value="C:nuclear envelope"/>
    <property type="evidence" value="ECO:0000314"/>
    <property type="project" value="TAIR"/>
</dbReference>
<dbReference type="GO" id="GO:0006983">
    <property type="term" value="P:ER overload response"/>
    <property type="evidence" value="ECO:0000315"/>
    <property type="project" value="TAIR"/>
</dbReference>
<dbReference type="GO" id="GO:0043066">
    <property type="term" value="P:negative regulation of apoptotic process"/>
    <property type="evidence" value="ECO:0007669"/>
    <property type="project" value="InterPro"/>
</dbReference>
<dbReference type="GO" id="GO:0043069">
    <property type="term" value="P:negative regulation of programmed cell death"/>
    <property type="evidence" value="ECO:0000315"/>
    <property type="project" value="TAIR"/>
</dbReference>
<dbReference type="GO" id="GO:0009414">
    <property type="term" value="P:response to water deprivation"/>
    <property type="evidence" value="ECO:0000270"/>
    <property type="project" value="TAIR"/>
</dbReference>
<dbReference type="GO" id="GO:0042761">
    <property type="term" value="P:very long-chain fatty acid biosynthetic process"/>
    <property type="evidence" value="ECO:0000314"/>
    <property type="project" value="TAIR"/>
</dbReference>
<dbReference type="GO" id="GO:0000038">
    <property type="term" value="P:very long-chain fatty acid metabolic process"/>
    <property type="evidence" value="ECO:0000315"/>
    <property type="project" value="TAIR"/>
</dbReference>
<dbReference type="CDD" id="cd10430">
    <property type="entry name" value="BI-1"/>
    <property type="match status" value="1"/>
</dbReference>
<dbReference type="InterPro" id="IPR006213">
    <property type="entry name" value="Bax_inhbtr1_CS"/>
</dbReference>
<dbReference type="InterPro" id="IPR006214">
    <property type="entry name" value="Bax_inhibitor_1-related"/>
</dbReference>
<dbReference type="PANTHER" id="PTHR23291:SF32">
    <property type="entry name" value="BAX INHIBITOR 1"/>
    <property type="match status" value="1"/>
</dbReference>
<dbReference type="PANTHER" id="PTHR23291">
    <property type="entry name" value="BAX INHIBITOR-RELATED"/>
    <property type="match status" value="1"/>
</dbReference>
<dbReference type="Pfam" id="PF01027">
    <property type="entry name" value="Bax1-I"/>
    <property type="match status" value="1"/>
</dbReference>
<dbReference type="PROSITE" id="PS01243">
    <property type="entry name" value="BI1"/>
    <property type="match status" value="1"/>
</dbReference>
<protein>
    <recommendedName>
        <fullName>Bax inhibitor 1</fullName>
        <shortName>AtBI-1</shortName>
        <shortName>BI-1</shortName>
    </recommendedName>
</protein>
<gene>
    <name type="primary">BI-1</name>
    <name type="ordered locus">At5g47120</name>
    <name type="ORF">K14A3.7</name>
</gene>
<evidence type="ECO:0000255" key="1"/>
<evidence type="ECO:0000269" key="2">
    <source>
    </source>
</evidence>
<evidence type="ECO:0000269" key="3">
    <source>
    </source>
</evidence>
<evidence type="ECO:0000269" key="4">
    <source>
    </source>
</evidence>
<evidence type="ECO:0000269" key="5">
    <source>
    </source>
</evidence>
<evidence type="ECO:0000269" key="6">
    <source>
    </source>
</evidence>
<evidence type="ECO:0000269" key="7">
    <source>
    </source>
</evidence>
<evidence type="ECO:0000269" key="8">
    <source>
    </source>
</evidence>
<evidence type="ECO:0000269" key="9">
    <source>
    </source>
</evidence>
<evidence type="ECO:0000305" key="10"/>
<evidence type="ECO:0007744" key="11">
    <source>
    </source>
</evidence>
<organism>
    <name type="scientific">Arabidopsis thaliana</name>
    <name type="common">Mouse-ear cress</name>
    <dbReference type="NCBI Taxonomy" id="3702"/>
    <lineage>
        <taxon>Eukaryota</taxon>
        <taxon>Viridiplantae</taxon>
        <taxon>Streptophyta</taxon>
        <taxon>Embryophyta</taxon>
        <taxon>Tracheophyta</taxon>
        <taxon>Spermatophyta</taxon>
        <taxon>Magnoliopsida</taxon>
        <taxon>eudicotyledons</taxon>
        <taxon>Gunneridae</taxon>
        <taxon>Pentapetalae</taxon>
        <taxon>rosids</taxon>
        <taxon>malvids</taxon>
        <taxon>Brassicales</taxon>
        <taxon>Brassicaceae</taxon>
        <taxon>Camelineae</taxon>
        <taxon>Arabidopsis</taxon>
    </lineage>
</organism>
<proteinExistence type="evidence at protein level"/>
<reference key="1">
    <citation type="journal article" date="1999" name="FEBS Lett.">
        <title>Evolutionally conserved plant homologue of the Bax inhibitor-1 (BI-1) gene capable of suppressing Bax-induced cell death in yeast.</title>
        <authorList>
            <person name="Kawai M."/>
            <person name="Pan L."/>
            <person name="Reed J.C."/>
            <person name="Uchimiya H."/>
        </authorList>
    </citation>
    <scope>NUCLEOTIDE SEQUENCE [MRNA]</scope>
    <source>
        <strain>cv. Columbia</strain>
    </source>
</reference>
<reference key="2">
    <citation type="journal article" date="2000" name="Plant J.">
        <title>AtBI-1, a plant homologue of Bax inhibitor-1, suppresses Bax-induced cell death in yeast and is rapidly upregulated during wounding and pathogen challenge.</title>
        <authorList>
            <person name="Sanchez P."/>
            <person name="de Torres-Zabala M."/>
            <person name="Grant M."/>
        </authorList>
    </citation>
    <scope>NUCLEOTIDE SEQUENCE [MRNA]</scope>
    <source>
        <strain>cv. Columbia</strain>
        <tissue>Leaf</tissue>
    </source>
</reference>
<reference key="3">
    <citation type="submission" date="1999-04" db="EMBL/GenBank/DDBJ databases">
        <title>Structural analysis of Arabidopsis thaliana chromosome 5. XI.</title>
        <authorList>
            <person name="Kaneko T."/>
            <person name="Katoh T."/>
            <person name="Asamizu E."/>
            <person name="Sato S."/>
            <person name="Nakamura Y."/>
            <person name="Kotani H."/>
            <person name="Tabata S."/>
        </authorList>
    </citation>
    <scope>NUCLEOTIDE SEQUENCE [LARGE SCALE GENOMIC DNA]</scope>
    <source>
        <strain>cv. Columbia</strain>
    </source>
</reference>
<reference key="4">
    <citation type="journal article" date="2017" name="Plant J.">
        <title>Araport11: a complete reannotation of the Arabidopsis thaliana reference genome.</title>
        <authorList>
            <person name="Cheng C.Y."/>
            <person name="Krishnakumar V."/>
            <person name="Chan A.P."/>
            <person name="Thibaud-Nissen F."/>
            <person name="Schobel S."/>
            <person name="Town C.D."/>
        </authorList>
    </citation>
    <scope>GENOME REANNOTATION</scope>
    <source>
        <strain>cv. Columbia</strain>
    </source>
</reference>
<reference key="5">
    <citation type="journal article" date="2003" name="Science">
        <title>Empirical analysis of transcriptional activity in the Arabidopsis genome.</title>
        <authorList>
            <person name="Yamada K."/>
            <person name="Lim J."/>
            <person name="Dale J.M."/>
            <person name="Chen H."/>
            <person name="Shinn P."/>
            <person name="Palm C.J."/>
            <person name="Southwick A.M."/>
            <person name="Wu H.C."/>
            <person name="Kim C.J."/>
            <person name="Nguyen M."/>
            <person name="Pham P.K."/>
            <person name="Cheuk R.F."/>
            <person name="Karlin-Newmann G."/>
            <person name="Liu S.X."/>
            <person name="Lam B."/>
            <person name="Sakano H."/>
            <person name="Wu T."/>
            <person name="Yu G."/>
            <person name="Miranda M."/>
            <person name="Quach H.L."/>
            <person name="Tripp M."/>
            <person name="Chang C.H."/>
            <person name="Lee J.M."/>
            <person name="Toriumi M.J."/>
            <person name="Chan M.M."/>
            <person name="Tang C.C."/>
            <person name="Onodera C.S."/>
            <person name="Deng J.M."/>
            <person name="Akiyama K."/>
            <person name="Ansari Y."/>
            <person name="Arakawa T."/>
            <person name="Banh J."/>
            <person name="Banno F."/>
            <person name="Bowser L."/>
            <person name="Brooks S.Y."/>
            <person name="Carninci P."/>
            <person name="Chao Q."/>
            <person name="Choy N."/>
            <person name="Enju A."/>
            <person name="Goldsmith A.D."/>
            <person name="Gurjal M."/>
            <person name="Hansen N.F."/>
            <person name="Hayashizaki Y."/>
            <person name="Johnson-Hopson C."/>
            <person name="Hsuan V.W."/>
            <person name="Iida K."/>
            <person name="Karnes M."/>
            <person name="Khan S."/>
            <person name="Koesema E."/>
            <person name="Ishida J."/>
            <person name="Jiang P.X."/>
            <person name="Jones T."/>
            <person name="Kawai J."/>
            <person name="Kamiya A."/>
            <person name="Meyers C."/>
            <person name="Nakajima M."/>
            <person name="Narusaka M."/>
            <person name="Seki M."/>
            <person name="Sakurai T."/>
            <person name="Satou M."/>
            <person name="Tamse R."/>
            <person name="Vaysberg M."/>
            <person name="Wallender E.K."/>
            <person name="Wong C."/>
            <person name="Yamamura Y."/>
            <person name="Yuan S."/>
            <person name="Shinozaki K."/>
            <person name="Davis R.W."/>
            <person name="Theologis A."/>
            <person name="Ecker J.R."/>
        </authorList>
    </citation>
    <scope>NUCLEOTIDE SEQUENCE [LARGE SCALE MRNA]</scope>
    <source>
        <strain>cv. Columbia</strain>
    </source>
</reference>
<reference key="6">
    <citation type="journal article" date="2006" name="Plant J.">
        <title>Arabidopsis Bax inhibitor-1 functions as an attenuator of biotic and abiotic types of cell death.</title>
        <authorList>
            <person name="Watanabe N."/>
            <person name="Lam E."/>
        </authorList>
    </citation>
    <scope>FUNCTION</scope>
    <scope>DISRUPTION PHENOTYPE</scope>
    <scope>INDUCTION BY HEAT-SHOCK AND MYCOTOXIN</scope>
</reference>
<reference key="7">
    <citation type="journal article" date="2007" name="Plant Physiol.">
        <title>Cell death suppressor Arabidopsis bax inhibitor-1 is associated with calmodulin binding and ion homeostasis.</title>
        <authorList>
            <person name="Ihara-Ohori Y."/>
            <person name="Nagano M."/>
            <person name="Muto S."/>
            <person name="Uchimiya H."/>
            <person name="Kawai-Yamada M."/>
        </authorList>
    </citation>
    <scope>INTERACTION WITH CALMODULIN</scope>
</reference>
<reference key="8">
    <citation type="journal article" date="2008" name="J. Biol. Chem.">
        <title>BAX inhibitor-1 modulates endoplasmic reticulum stress-mediated programmed cell death in Arabidopsis.</title>
        <authorList>
            <person name="Watanabe N."/>
            <person name="Lam E."/>
        </authorList>
    </citation>
    <scope>FUNCTION</scope>
    <scope>DISRUPTION PHENOTYPE</scope>
</reference>
<reference key="9">
    <citation type="journal article" date="2009" name="J. Biol. Chem.">
        <title>Loss of calmodulin binding to Bax inhibitor-1 affects Pseudomonas-mediated hypersensitive response-associated cell death in Arabidopsis thaliana.</title>
        <authorList>
            <person name="Kawai-Yamada M."/>
            <person name="Hori Z."/>
            <person name="Ogawa T."/>
            <person name="Ihara-Ohori Y."/>
            <person name="Tamura K."/>
            <person name="Nagano M."/>
            <person name="Ishikawa T."/>
            <person name="Uchimiya H."/>
        </authorList>
    </citation>
    <scope>INTERACTION WITH CALMODULIN</scope>
    <scope>DISRUPTION PHENOTYPE</scope>
    <scope>TISSUE SPECIFICITY</scope>
    <scope>INDUCTION BY PATHOGEN</scope>
</reference>
<reference key="10">
    <citation type="journal article" date="2009" name="Plant J.">
        <title>Functional association of cell death suppressor, Arabidopsis Bax inhibitor-1, with fatty acid 2-hydroxylation through cytochrome b(5).</title>
        <authorList>
            <person name="Nagano M."/>
            <person name="Ihara-Ohori Y."/>
            <person name="Imai H."/>
            <person name="Inada N."/>
            <person name="Fujimoto M."/>
            <person name="Tsutsumi N."/>
            <person name="Uchimiya H."/>
            <person name="Kawai-Yamada M."/>
        </authorList>
    </citation>
    <scope>SUBCELLULAR LOCATION</scope>
    <scope>INTERACTION WITH CYTB5-B</scope>
</reference>
<reference key="11">
    <citation type="journal article" date="2010" name="New Phytol.">
        <title>An endoplasmic reticulum response pathway mediates programmed cell death of root tip induced by water stress in Arabidopsis.</title>
        <authorList>
            <person name="Duan Y."/>
            <person name="Zhang W."/>
            <person name="Li B."/>
            <person name="Wang Y."/>
            <person name="Li K."/>
            <person name="Sodmergen X."/>
            <person name="Han C."/>
            <person name="Zhang Y."/>
            <person name="Li X."/>
        </authorList>
    </citation>
    <scope>INDUCTION BY WATER STRESS</scope>
    <scope>DISRUPTION PHENOTYPE</scope>
    <source>
        <strain>cv. Columbia</strain>
    </source>
</reference>
<reference key="12">
    <citation type="journal article" date="2012" name="J. Exp. Bot.">
        <title>Over-expression of Arabidopsis Bax inhibitor-1 delays methyl jasmonate-induced leaf senescence by suppressing the activation of MAP kinase 6.</title>
        <authorList>
            <person name="Yue H."/>
            <person name="Nie S."/>
            <person name="Xing D."/>
        </authorList>
    </citation>
    <scope>FUNCTION</scope>
    <scope>DISRUPTION PHENOTYPE</scope>
    <source>
        <strain>cv. Columbia</strain>
    </source>
</reference>
<reference key="13">
    <citation type="journal article" date="2012" name="Mol. Cell. Proteomics">
        <title>Comparative large-scale characterisation of plant vs. mammal proteins reveals similar and idiosyncratic N-alpha acetylation features.</title>
        <authorList>
            <person name="Bienvenut W.V."/>
            <person name="Sumpton D."/>
            <person name="Martinez A."/>
            <person name="Lilla S."/>
            <person name="Espagne C."/>
            <person name="Meinnel T."/>
            <person name="Giglione C."/>
        </authorList>
    </citation>
    <scope>ACETYLATION [LARGE SCALE ANALYSIS] AT MET-1</scope>
    <scope>IDENTIFICATION BY MASS SPECTROMETRY [LARGE SCALE ANALYSIS]</scope>
</reference>
<reference key="14">
    <citation type="journal article" date="2012" name="Plant Physiol.">
        <title>Arabidopsis sphingolipid fatty acid 2-hydroxylases (AtFAH1 and AtFAH2) are functionally differentiated in fatty acid 2-hydroxylation and stress responses.</title>
        <authorList>
            <person name="Nagano M."/>
            <person name="Takahara K."/>
            <person name="Fujimoto M."/>
            <person name="Tsutsumi N."/>
            <person name="Uchimiya H."/>
            <person name="Kawai-Yamada M."/>
        </authorList>
    </citation>
    <scope>INTERACTION WITH CYTB5-D</scope>
    <source>
        <strain>cv. Columbia</strain>
    </source>
</reference>
<feature type="chain" id="PRO_0000179085" description="Bax inhibitor 1">
    <location>
        <begin position="1"/>
        <end position="247"/>
    </location>
</feature>
<feature type="transmembrane region" description="Helical" evidence="1">
    <location>
        <begin position="58"/>
        <end position="78"/>
    </location>
</feature>
<feature type="transmembrane region" description="Helical" evidence="1">
    <location>
        <begin position="92"/>
        <end position="112"/>
    </location>
</feature>
<feature type="transmembrane region" description="Helical" evidence="1">
    <location>
        <begin position="118"/>
        <end position="138"/>
    </location>
</feature>
<feature type="transmembrane region" description="Helical" evidence="1">
    <location>
        <begin position="145"/>
        <end position="165"/>
    </location>
</feature>
<feature type="transmembrane region" description="Helical" evidence="1">
    <location>
        <begin position="173"/>
        <end position="193"/>
    </location>
</feature>
<feature type="transmembrane region" description="Helical" evidence="1">
    <location>
        <begin position="212"/>
        <end position="232"/>
    </location>
</feature>
<feature type="modified residue" description="N-acetylmethionine" evidence="11">
    <location>
        <position position="1"/>
    </location>
</feature>
<sequence length="247" mass="27483">MDAFSSFFDSQPGSRSWSYDSLKNFRQISPAVQNHLKRVYLTLCCALVASAFGAYLHVLWNIGGILTTIGCIGTMIWLLSCPPYEHQKRLSLLFVSAVLEGASVGPLIKVAIDVDPSILITAFVGTAIAFVCFSAAAMLARRREYLYLGGLLSSGLSMLMWLQFASSIFGGSASIFKFELYFGLLIFVGYMVVDTQEIIEKAHLGDMDYVKHSLTLFTDFVAVFVRILIIMLKNSADKEEKKKKRRN</sequence>
<name>BI1_ARATH</name>